<gene>
    <name evidence="1" type="primary">rpsG</name>
    <name type="ordered locus">BPUM_0097</name>
</gene>
<keyword id="KW-0687">Ribonucleoprotein</keyword>
<keyword id="KW-0689">Ribosomal protein</keyword>
<keyword id="KW-0694">RNA-binding</keyword>
<keyword id="KW-0699">rRNA-binding</keyword>
<keyword id="KW-0820">tRNA-binding</keyword>
<sequence length="156" mass="17911">MPRKGPVAKRDVLPDPIYNSKLVSRLINKMMIDGKRGKSQTILYKSFDIIKERTGNEAMEVFEQALKNIMPVLEVKARRVGGANYQVPVEVRPDRRTTLGLRWLVNYARLRGEKTMEERLANEILDAANNTGAAVKKREDTHKMAEANKAFAHYRW</sequence>
<evidence type="ECO:0000255" key="1">
    <source>
        <dbReference type="HAMAP-Rule" id="MF_00480"/>
    </source>
</evidence>
<evidence type="ECO:0000305" key="2"/>
<protein>
    <recommendedName>
        <fullName evidence="1">Small ribosomal subunit protein uS7</fullName>
    </recommendedName>
    <alternativeName>
        <fullName evidence="2">30S ribosomal protein S7</fullName>
    </alternativeName>
</protein>
<name>RS7_BACP2</name>
<dbReference type="EMBL" id="CP000813">
    <property type="protein sequence ID" value="ABV60797.1"/>
    <property type="molecule type" value="Genomic_DNA"/>
</dbReference>
<dbReference type="RefSeq" id="WP_003216884.1">
    <property type="nucleotide sequence ID" value="NZ_VEIS01000020.1"/>
</dbReference>
<dbReference type="SMR" id="A8F980"/>
<dbReference type="STRING" id="315750.BPUM_0097"/>
<dbReference type="GeneID" id="66361728"/>
<dbReference type="KEGG" id="bpu:BPUM_0097"/>
<dbReference type="eggNOG" id="COG0049">
    <property type="taxonomic scope" value="Bacteria"/>
</dbReference>
<dbReference type="HOGENOM" id="CLU_072226_1_1_9"/>
<dbReference type="OrthoDB" id="9807653at2"/>
<dbReference type="Proteomes" id="UP000001355">
    <property type="component" value="Chromosome"/>
</dbReference>
<dbReference type="GO" id="GO:0015935">
    <property type="term" value="C:small ribosomal subunit"/>
    <property type="evidence" value="ECO:0007669"/>
    <property type="project" value="InterPro"/>
</dbReference>
<dbReference type="GO" id="GO:0019843">
    <property type="term" value="F:rRNA binding"/>
    <property type="evidence" value="ECO:0007669"/>
    <property type="project" value="UniProtKB-UniRule"/>
</dbReference>
<dbReference type="GO" id="GO:0003735">
    <property type="term" value="F:structural constituent of ribosome"/>
    <property type="evidence" value="ECO:0007669"/>
    <property type="project" value="InterPro"/>
</dbReference>
<dbReference type="GO" id="GO:0000049">
    <property type="term" value="F:tRNA binding"/>
    <property type="evidence" value="ECO:0007669"/>
    <property type="project" value="UniProtKB-UniRule"/>
</dbReference>
<dbReference type="GO" id="GO:0006412">
    <property type="term" value="P:translation"/>
    <property type="evidence" value="ECO:0007669"/>
    <property type="project" value="UniProtKB-UniRule"/>
</dbReference>
<dbReference type="CDD" id="cd14869">
    <property type="entry name" value="uS7_Bacteria"/>
    <property type="match status" value="1"/>
</dbReference>
<dbReference type="FunFam" id="1.10.455.10:FF:000001">
    <property type="entry name" value="30S ribosomal protein S7"/>
    <property type="match status" value="1"/>
</dbReference>
<dbReference type="Gene3D" id="1.10.455.10">
    <property type="entry name" value="Ribosomal protein S7 domain"/>
    <property type="match status" value="1"/>
</dbReference>
<dbReference type="HAMAP" id="MF_00480_B">
    <property type="entry name" value="Ribosomal_uS7_B"/>
    <property type="match status" value="1"/>
</dbReference>
<dbReference type="InterPro" id="IPR000235">
    <property type="entry name" value="Ribosomal_uS7"/>
</dbReference>
<dbReference type="InterPro" id="IPR005717">
    <property type="entry name" value="Ribosomal_uS7_bac/org-type"/>
</dbReference>
<dbReference type="InterPro" id="IPR020606">
    <property type="entry name" value="Ribosomal_uS7_CS"/>
</dbReference>
<dbReference type="InterPro" id="IPR023798">
    <property type="entry name" value="Ribosomal_uS7_dom"/>
</dbReference>
<dbReference type="InterPro" id="IPR036823">
    <property type="entry name" value="Ribosomal_uS7_dom_sf"/>
</dbReference>
<dbReference type="NCBIfam" id="TIGR01029">
    <property type="entry name" value="rpsG_bact"/>
    <property type="match status" value="1"/>
</dbReference>
<dbReference type="PANTHER" id="PTHR11205">
    <property type="entry name" value="RIBOSOMAL PROTEIN S7"/>
    <property type="match status" value="1"/>
</dbReference>
<dbReference type="Pfam" id="PF00177">
    <property type="entry name" value="Ribosomal_S7"/>
    <property type="match status" value="1"/>
</dbReference>
<dbReference type="PIRSF" id="PIRSF002122">
    <property type="entry name" value="RPS7p_RPS7a_RPS5e_RPS7o"/>
    <property type="match status" value="1"/>
</dbReference>
<dbReference type="SUPFAM" id="SSF47973">
    <property type="entry name" value="Ribosomal protein S7"/>
    <property type="match status" value="1"/>
</dbReference>
<dbReference type="PROSITE" id="PS00052">
    <property type="entry name" value="RIBOSOMAL_S7"/>
    <property type="match status" value="1"/>
</dbReference>
<proteinExistence type="inferred from homology"/>
<accession>A8F980</accession>
<comment type="function">
    <text evidence="1">One of the primary rRNA binding proteins, it binds directly to 16S rRNA where it nucleates assembly of the head domain of the 30S subunit. Is located at the subunit interface close to the decoding center, probably blocks exit of the E-site tRNA.</text>
</comment>
<comment type="subunit">
    <text evidence="1">Part of the 30S ribosomal subunit. Contacts proteins S9 and S11.</text>
</comment>
<comment type="similarity">
    <text evidence="1">Belongs to the universal ribosomal protein uS7 family.</text>
</comment>
<feature type="chain" id="PRO_1000060415" description="Small ribosomal subunit protein uS7">
    <location>
        <begin position="1"/>
        <end position="156"/>
    </location>
</feature>
<organism>
    <name type="scientific">Bacillus pumilus (strain SAFR-032)</name>
    <dbReference type="NCBI Taxonomy" id="315750"/>
    <lineage>
        <taxon>Bacteria</taxon>
        <taxon>Bacillati</taxon>
        <taxon>Bacillota</taxon>
        <taxon>Bacilli</taxon>
        <taxon>Bacillales</taxon>
        <taxon>Bacillaceae</taxon>
        <taxon>Bacillus</taxon>
    </lineage>
</organism>
<reference key="1">
    <citation type="journal article" date="2007" name="PLoS ONE">
        <title>Paradoxical DNA repair and peroxide resistance gene conservation in Bacillus pumilus SAFR-032.</title>
        <authorList>
            <person name="Gioia J."/>
            <person name="Yerrapragada S."/>
            <person name="Qin X."/>
            <person name="Jiang H."/>
            <person name="Igboeli O.C."/>
            <person name="Muzny D."/>
            <person name="Dugan-Rocha S."/>
            <person name="Ding Y."/>
            <person name="Hawes A."/>
            <person name="Liu W."/>
            <person name="Perez L."/>
            <person name="Kovar C."/>
            <person name="Dinh H."/>
            <person name="Lee S."/>
            <person name="Nazareth L."/>
            <person name="Blyth P."/>
            <person name="Holder M."/>
            <person name="Buhay C."/>
            <person name="Tirumalai M.R."/>
            <person name="Liu Y."/>
            <person name="Dasgupta I."/>
            <person name="Bokhetache L."/>
            <person name="Fujita M."/>
            <person name="Karouia F."/>
            <person name="Eswara Moorthy P."/>
            <person name="Siefert J."/>
            <person name="Uzman A."/>
            <person name="Buzumbo P."/>
            <person name="Verma A."/>
            <person name="Zwiya H."/>
            <person name="McWilliams B.D."/>
            <person name="Olowu A."/>
            <person name="Clinkenbeard K.D."/>
            <person name="Newcombe D."/>
            <person name="Golebiewski L."/>
            <person name="Petrosino J.F."/>
            <person name="Nicholson W.L."/>
            <person name="Fox G.E."/>
            <person name="Venkateswaran K."/>
            <person name="Highlander S.K."/>
            <person name="Weinstock G.M."/>
        </authorList>
    </citation>
    <scope>NUCLEOTIDE SEQUENCE [LARGE SCALE GENOMIC DNA]</scope>
    <source>
        <strain>SAFR-032</strain>
    </source>
</reference>